<dbReference type="EMBL" id="BC089225">
    <property type="protein sequence ID" value="AAH89225.1"/>
    <property type="molecule type" value="mRNA"/>
</dbReference>
<dbReference type="RefSeq" id="NP_001020148.1">
    <property type="nucleotide sequence ID" value="NM_001024977.2"/>
</dbReference>
<dbReference type="RefSeq" id="XP_017457111.1">
    <property type="nucleotide sequence ID" value="XM_017601622.1"/>
</dbReference>
<dbReference type="SMR" id="Q5FWS4"/>
<dbReference type="FunCoup" id="Q5FWS4">
    <property type="interactions" value="230"/>
</dbReference>
<dbReference type="STRING" id="10116.ENSRNOP00000054130"/>
<dbReference type="PhosphoSitePlus" id="Q5FWS4"/>
<dbReference type="SwissPalm" id="Q5FWS4"/>
<dbReference type="PaxDb" id="10116-ENSRNOP00000054130"/>
<dbReference type="Ensembl" id="ENSRNOT00000057313.5">
    <property type="protein sequence ID" value="ENSRNOP00000054130.2"/>
    <property type="gene ID" value="ENSRNOG00000000825.7"/>
</dbReference>
<dbReference type="GeneID" id="294431"/>
<dbReference type="KEGG" id="rno:294431"/>
<dbReference type="UCSC" id="RGD:1310405">
    <property type="organism name" value="rat"/>
</dbReference>
<dbReference type="AGR" id="RGD:1310405"/>
<dbReference type="CTD" id="254228"/>
<dbReference type="RGD" id="1310405">
    <property type="gene designation" value="Calhm5"/>
</dbReference>
<dbReference type="eggNOG" id="ENOG502QPKW">
    <property type="taxonomic scope" value="Eukaryota"/>
</dbReference>
<dbReference type="GeneTree" id="ENSGT01030000234610"/>
<dbReference type="HOGENOM" id="CLU_069286_2_0_1"/>
<dbReference type="InParanoid" id="Q5FWS4"/>
<dbReference type="OMA" id="HYSTIHR"/>
<dbReference type="OrthoDB" id="15160at9989"/>
<dbReference type="PhylomeDB" id="Q5FWS4"/>
<dbReference type="TreeFam" id="TF329085"/>
<dbReference type="PRO" id="PR:Q5FWS4"/>
<dbReference type="Proteomes" id="UP000002494">
    <property type="component" value="Chromosome 20"/>
</dbReference>
<dbReference type="Bgee" id="ENSRNOG00000000825">
    <property type="expression patterns" value="Expressed in heart and 9 other cell types or tissues"/>
</dbReference>
<dbReference type="GO" id="GO:0005886">
    <property type="term" value="C:plasma membrane"/>
    <property type="evidence" value="ECO:0000318"/>
    <property type="project" value="GO_Central"/>
</dbReference>
<dbReference type="GO" id="GO:0005261">
    <property type="term" value="F:monoatomic cation channel activity"/>
    <property type="evidence" value="ECO:0000318"/>
    <property type="project" value="GO_Central"/>
</dbReference>
<dbReference type="GO" id="GO:1904669">
    <property type="term" value="P:ATP export"/>
    <property type="evidence" value="ECO:0007669"/>
    <property type="project" value="UniProtKB-ARBA"/>
</dbReference>
<dbReference type="InterPro" id="IPR029569">
    <property type="entry name" value="CALHM"/>
</dbReference>
<dbReference type="PANTHER" id="PTHR32261">
    <property type="entry name" value="CALCIUM HOMEOSTASIS MODULATOR PROTEIN"/>
    <property type="match status" value="1"/>
</dbReference>
<dbReference type="PANTHER" id="PTHR32261:SF8">
    <property type="entry name" value="CALCIUM HOMEOSTASIS MODULATOR PROTEIN 5"/>
    <property type="match status" value="1"/>
</dbReference>
<dbReference type="Pfam" id="PF14798">
    <property type="entry name" value="Ca_hom_mod"/>
    <property type="match status" value="1"/>
</dbReference>
<organism>
    <name type="scientific">Rattus norvegicus</name>
    <name type="common">Rat</name>
    <dbReference type="NCBI Taxonomy" id="10116"/>
    <lineage>
        <taxon>Eukaryota</taxon>
        <taxon>Metazoa</taxon>
        <taxon>Chordata</taxon>
        <taxon>Craniata</taxon>
        <taxon>Vertebrata</taxon>
        <taxon>Euteleostomi</taxon>
        <taxon>Mammalia</taxon>
        <taxon>Eutheria</taxon>
        <taxon>Euarchontoglires</taxon>
        <taxon>Glires</taxon>
        <taxon>Rodentia</taxon>
        <taxon>Myomorpha</taxon>
        <taxon>Muroidea</taxon>
        <taxon>Muridae</taxon>
        <taxon>Murinae</taxon>
        <taxon>Rattus</taxon>
    </lineage>
</organism>
<feature type="chain" id="PRO_0000186728" description="Calcium homeostasis modulator protein 5">
    <location>
        <begin position="1"/>
        <end position="309"/>
    </location>
</feature>
<feature type="topological domain" description="Cytoplasmic" evidence="3">
    <location>
        <begin position="1"/>
        <end position="15"/>
    </location>
</feature>
<feature type="transmembrane region" description="Helical; Name=S1" evidence="1">
    <location>
        <begin position="16"/>
        <end position="37"/>
    </location>
</feature>
<feature type="topological domain" description="Extracellular" evidence="3">
    <location>
        <begin position="38"/>
        <end position="45"/>
    </location>
</feature>
<feature type="transmembrane region" description="Helical; Name=S2" evidence="1">
    <location>
        <begin position="46"/>
        <end position="70"/>
    </location>
</feature>
<feature type="topological domain" description="Cytoplasmic" evidence="3">
    <location>
        <begin position="71"/>
        <end position="99"/>
    </location>
</feature>
<feature type="transmembrane region" description="Helical; Name=S3" evidence="1">
    <location>
        <begin position="100"/>
        <end position="129"/>
    </location>
</feature>
<feature type="topological domain" description="Extracellular" evidence="3">
    <location>
        <begin position="130"/>
        <end position="174"/>
    </location>
</feature>
<feature type="transmembrane region" description="Helical; Name=S4" evidence="1">
    <location>
        <begin position="175"/>
        <end position="200"/>
    </location>
</feature>
<feature type="topological domain" description="Cytoplasmic" evidence="3">
    <location>
        <begin position="201"/>
        <end position="309"/>
    </location>
</feature>
<feature type="binding site" evidence="1">
    <location>
        <position position="32"/>
    </location>
    <ligand>
        <name>a 1,2-diacyl-sn-glycero-3-phosphate</name>
        <dbReference type="ChEBI" id="CHEBI:58608"/>
    </ligand>
</feature>
<feature type="binding site" evidence="1">
    <location>
        <position position="37"/>
    </location>
    <ligand>
        <name>a 1,2-diacyl-sn-glycero-3-phosphate</name>
        <dbReference type="ChEBI" id="CHEBI:58608"/>
    </ligand>
</feature>
<feature type="binding site" evidence="1">
    <location>
        <position position="121"/>
    </location>
    <ligand>
        <name>a 1,2-diacyl-sn-glycero-3-phosphate</name>
        <dbReference type="ChEBI" id="CHEBI:58608"/>
    </ligand>
</feature>
<feature type="binding site" evidence="1">
    <location>
        <position position="202"/>
    </location>
    <ligand>
        <name>a 1,2-diacyl-sn-glycero-3-phosphate</name>
        <dbReference type="ChEBI" id="CHEBI:58608"/>
    </ligand>
</feature>
<feature type="disulfide bond" evidence="1">
    <location>
        <begin position="41"/>
        <end position="127"/>
    </location>
</feature>
<feature type="disulfide bond" evidence="1">
    <location>
        <begin position="43"/>
        <end position="158"/>
    </location>
</feature>
<feature type="disulfide bond" evidence="1">
    <location>
        <begin position="142"/>
        <end position="149"/>
    </location>
</feature>
<evidence type="ECO:0000250" key="1">
    <source>
        <dbReference type="UniProtKB" id="Q8N5C1"/>
    </source>
</evidence>
<evidence type="ECO:0000255" key="2"/>
<evidence type="ECO:0000305" key="3"/>
<evidence type="ECO:0000312" key="4">
    <source>
        <dbReference type="RGD" id="1310405"/>
    </source>
</evidence>
<keyword id="KW-1015">Disulfide bond</keyword>
<keyword id="KW-0407">Ion channel</keyword>
<keyword id="KW-0406">Ion transport</keyword>
<keyword id="KW-0472">Membrane</keyword>
<keyword id="KW-1185">Reference proteome</keyword>
<keyword id="KW-0812">Transmembrane</keyword>
<keyword id="KW-1133">Transmembrane helix</keyword>
<keyword id="KW-0813">Transport</keyword>
<name>CAHM5_RAT</name>
<accession>Q5FWS4</accession>
<proteinExistence type="evidence at transcript level"/>
<protein>
    <recommendedName>
        <fullName>Calcium homeostasis modulator protein 5</fullName>
    </recommendedName>
    <alternativeName>
        <fullName>Protein FAM26E</fullName>
    </alternativeName>
</protein>
<sequence>MDAFQSILKFFLNQKTAIGYSFMALLTVGSERLFSLVAFKCPCSIENTAYGLVFLFAPAWVLLILGFFLNNKAWRLFTGCCMNPQKIFPRRRCCRFFYVLGHITLSSLVAPVMWLSVALLNGTFYECAMSGTRSTRLLEMICKGKPKECWEELHKVSCGKSSMAAMDSEEVRLSLQAQSQILGWCLICSASFFSLLTTCYARCRSKVSYLQLSFWKTYAQREKEQLENKLLEYANKLSERNLKCFFENKKPDPFPMPSFAAWEAASELHSFHQDREHYSTLHKVVDDGLEQTPQEEETTMILVGTAQSL</sequence>
<comment type="function">
    <text evidence="1">May assemble to form large pore channels with gating and ion conductance likely regulated by membrane lipids.</text>
</comment>
<comment type="subunit">
    <text evidence="1">Oligomerizes to form undecameric cone-shaped channels.</text>
</comment>
<comment type="subcellular location">
    <subcellularLocation>
        <location evidence="3">Membrane</location>
        <topology evidence="2">Multi-pass membrane protein</topology>
    </subcellularLocation>
</comment>
<comment type="similarity">
    <text evidence="3">Belongs to the CALHM family.</text>
</comment>
<gene>
    <name evidence="4" type="primary">Calhm5</name>
    <name type="synonym">Fam26e</name>
</gene>
<reference key="1">
    <citation type="journal article" date="2004" name="Genome Res.">
        <title>The status, quality, and expansion of the NIH full-length cDNA project: the Mammalian Gene Collection (MGC).</title>
        <authorList>
            <consortium name="The MGC Project Team"/>
        </authorList>
    </citation>
    <scope>NUCLEOTIDE SEQUENCE [LARGE SCALE MRNA]</scope>
    <source>
        <tissue>Ovary</tissue>
    </source>
</reference>